<reference key="1">
    <citation type="journal article" date="2007" name="Genome Biol.">
        <title>Characterization and modeling of the Haemophilus influenzae core and supragenomes based on the complete genomic sequences of Rd and 12 clinical nontypeable strains.</title>
        <authorList>
            <person name="Hogg J.S."/>
            <person name="Hu F.Z."/>
            <person name="Janto B."/>
            <person name="Boissy R."/>
            <person name="Hayes J."/>
            <person name="Keefe R."/>
            <person name="Post J.C."/>
            <person name="Ehrlich G.D."/>
        </authorList>
    </citation>
    <scope>NUCLEOTIDE SEQUENCE [LARGE SCALE GENOMIC DNA]</scope>
    <source>
        <strain>PittGG</strain>
    </source>
</reference>
<name>GLGA_HAEIG</name>
<comment type="function">
    <text evidence="1">Synthesizes alpha-1,4-glucan chains using ADP-glucose.</text>
</comment>
<comment type="catalytic activity">
    <reaction evidence="1">
        <text>[(1-&gt;4)-alpha-D-glucosyl](n) + ADP-alpha-D-glucose = [(1-&gt;4)-alpha-D-glucosyl](n+1) + ADP + H(+)</text>
        <dbReference type="Rhea" id="RHEA:18189"/>
        <dbReference type="Rhea" id="RHEA-COMP:9584"/>
        <dbReference type="Rhea" id="RHEA-COMP:9587"/>
        <dbReference type="ChEBI" id="CHEBI:15378"/>
        <dbReference type="ChEBI" id="CHEBI:15444"/>
        <dbReference type="ChEBI" id="CHEBI:57498"/>
        <dbReference type="ChEBI" id="CHEBI:456216"/>
        <dbReference type="EC" id="2.4.1.21"/>
    </reaction>
</comment>
<comment type="pathway">
    <text evidence="1">Glycan biosynthesis; glycogen biosynthesis.</text>
</comment>
<comment type="similarity">
    <text evidence="1">Belongs to the glycosyltransferase 1 family. Bacterial/plant glycogen synthase subfamily.</text>
</comment>
<proteinExistence type="inferred from homology"/>
<accession>A5UEJ5</accession>
<feature type="chain" id="PRO_1000014363" description="Glycogen synthase">
    <location>
        <begin position="1"/>
        <end position="476"/>
    </location>
</feature>
<feature type="binding site" evidence="1">
    <location>
        <position position="15"/>
    </location>
    <ligand>
        <name>ADP-alpha-D-glucose</name>
        <dbReference type="ChEBI" id="CHEBI:57498"/>
    </ligand>
</feature>
<gene>
    <name evidence="1" type="primary">glgA</name>
    <name type="ordered locus">CGSHiGG_00455</name>
</gene>
<protein>
    <recommendedName>
        <fullName evidence="1">Glycogen synthase</fullName>
        <ecNumber evidence="1">2.4.1.21</ecNumber>
    </recommendedName>
    <alternativeName>
        <fullName evidence="1">Starch [bacterial glycogen] synthase</fullName>
    </alternativeName>
</protein>
<organism>
    <name type="scientific">Haemophilus influenzae (strain PittGG)</name>
    <dbReference type="NCBI Taxonomy" id="374931"/>
    <lineage>
        <taxon>Bacteria</taxon>
        <taxon>Pseudomonadati</taxon>
        <taxon>Pseudomonadota</taxon>
        <taxon>Gammaproteobacteria</taxon>
        <taxon>Pasteurellales</taxon>
        <taxon>Pasteurellaceae</taxon>
        <taxon>Haemophilus</taxon>
    </lineage>
</organism>
<keyword id="KW-0320">Glycogen biosynthesis</keyword>
<keyword id="KW-0328">Glycosyltransferase</keyword>
<keyword id="KW-0808">Transferase</keyword>
<dbReference type="EC" id="2.4.1.21" evidence="1"/>
<dbReference type="EMBL" id="CP000672">
    <property type="protein sequence ID" value="ABQ99200.1"/>
    <property type="molecule type" value="Genomic_DNA"/>
</dbReference>
<dbReference type="SMR" id="A5UEJ5"/>
<dbReference type="CAZy" id="GT5">
    <property type="family name" value="Glycosyltransferase Family 5"/>
</dbReference>
<dbReference type="KEGG" id="hiq:CGSHiGG_00455"/>
<dbReference type="HOGENOM" id="CLU_009583_18_4_6"/>
<dbReference type="UniPathway" id="UPA00164"/>
<dbReference type="Proteomes" id="UP000001990">
    <property type="component" value="Chromosome"/>
</dbReference>
<dbReference type="GO" id="GO:0005829">
    <property type="term" value="C:cytosol"/>
    <property type="evidence" value="ECO:0007669"/>
    <property type="project" value="TreeGrafter"/>
</dbReference>
<dbReference type="GO" id="GO:0009011">
    <property type="term" value="F:alpha-1,4-glucan glucosyltransferase (ADP-glucose donor) activity"/>
    <property type="evidence" value="ECO:0007669"/>
    <property type="project" value="UniProtKB-UniRule"/>
</dbReference>
<dbReference type="GO" id="GO:0004373">
    <property type="term" value="F:alpha-1,4-glucan glucosyltransferase (UDP-glucose donor) activity"/>
    <property type="evidence" value="ECO:0007669"/>
    <property type="project" value="InterPro"/>
</dbReference>
<dbReference type="GO" id="GO:0005978">
    <property type="term" value="P:glycogen biosynthetic process"/>
    <property type="evidence" value="ECO:0007669"/>
    <property type="project" value="UniProtKB-UniRule"/>
</dbReference>
<dbReference type="CDD" id="cd03791">
    <property type="entry name" value="GT5_Glycogen_synthase_DULL1-like"/>
    <property type="match status" value="1"/>
</dbReference>
<dbReference type="FunFam" id="3.40.50.2000:FF:000011">
    <property type="entry name" value="Glycogen synthase"/>
    <property type="match status" value="1"/>
</dbReference>
<dbReference type="Gene3D" id="3.40.50.2000">
    <property type="entry name" value="Glycogen Phosphorylase B"/>
    <property type="match status" value="2"/>
</dbReference>
<dbReference type="HAMAP" id="MF_00484">
    <property type="entry name" value="Glycogen_synth"/>
    <property type="match status" value="1"/>
</dbReference>
<dbReference type="InterPro" id="IPR001296">
    <property type="entry name" value="Glyco_trans_1"/>
</dbReference>
<dbReference type="InterPro" id="IPR011835">
    <property type="entry name" value="GS/SS"/>
</dbReference>
<dbReference type="InterPro" id="IPR013534">
    <property type="entry name" value="Starch_synth_cat_dom"/>
</dbReference>
<dbReference type="NCBIfam" id="TIGR02095">
    <property type="entry name" value="glgA"/>
    <property type="match status" value="1"/>
</dbReference>
<dbReference type="NCBIfam" id="NF001899">
    <property type="entry name" value="PRK00654.1-2"/>
    <property type="match status" value="1"/>
</dbReference>
<dbReference type="PANTHER" id="PTHR45825:SF11">
    <property type="entry name" value="ALPHA AMYLASE DOMAIN-CONTAINING PROTEIN"/>
    <property type="match status" value="1"/>
</dbReference>
<dbReference type="PANTHER" id="PTHR45825">
    <property type="entry name" value="GRANULE-BOUND STARCH SYNTHASE 1, CHLOROPLASTIC/AMYLOPLASTIC"/>
    <property type="match status" value="1"/>
</dbReference>
<dbReference type="Pfam" id="PF08323">
    <property type="entry name" value="Glyco_transf_5"/>
    <property type="match status" value="1"/>
</dbReference>
<dbReference type="Pfam" id="PF00534">
    <property type="entry name" value="Glycos_transf_1"/>
    <property type="match status" value="1"/>
</dbReference>
<dbReference type="SUPFAM" id="SSF53756">
    <property type="entry name" value="UDP-Glycosyltransferase/glycogen phosphorylase"/>
    <property type="match status" value="1"/>
</dbReference>
<sequence length="476" mass="52808">MKILHVCSELYPLLKTGGLADVLGALPQAQNQIGLDARVLLPAYPAIIAGIPNTQVVAEFDNFAGHVVLRYGEYNGVGIYLIDAPHLYGREGNPYHDAYYNDYGDNYKRFALLGWVGAELATGLDSWWRAEVVHAHDWHAGLCAAYLFNKGRPAKSVFTIHNLAYQGQFSYHHLYEIGLPTGMFHVEGLELFGQISYLKSGLFYSDASTAVSPTYAQEITTPEFAYGLQGLLSGLKAQDRLVGILNGVDENIWHPNVDQYIPHHYKLKYMAGKKKNKAELQAYFNLPQDESALAFVMVTRLTEQKGVDLLIESADEIVKQGGQLMILGSGAPHLEQGIRELAERYPQNIAVKIGYDEALSHLMVAGGDVILVPSRFEPCGLTQLYGLQYGTLPLVRKTGGLADTVVDSTSESIKACTATGFVFESATPEALRHCLQRAFALWQKPRAWAIVRTDAMAQDFSWRKAAEQYRALYERL</sequence>
<evidence type="ECO:0000255" key="1">
    <source>
        <dbReference type="HAMAP-Rule" id="MF_00484"/>
    </source>
</evidence>